<organism>
    <name type="scientific">Nicotiana plumbaginifolia</name>
    <name type="common">Leadwort-leaved tobacco</name>
    <name type="synonym">Tex-Mex tobacco</name>
    <dbReference type="NCBI Taxonomy" id="4092"/>
    <lineage>
        <taxon>Eukaryota</taxon>
        <taxon>Viridiplantae</taxon>
        <taxon>Streptophyta</taxon>
        <taxon>Embryophyta</taxon>
        <taxon>Tracheophyta</taxon>
        <taxon>Spermatophyta</taxon>
        <taxon>Magnoliopsida</taxon>
        <taxon>eudicotyledons</taxon>
        <taxon>Gunneridae</taxon>
        <taxon>Pentapetalae</taxon>
        <taxon>asterids</taxon>
        <taxon>lamiids</taxon>
        <taxon>Solanales</taxon>
        <taxon>Solanaceae</taxon>
        <taxon>Nicotianoideae</taxon>
        <taxon>Nicotianeae</taxon>
        <taxon>Nicotiana</taxon>
    </lineage>
</organism>
<protein>
    <recommendedName>
        <fullName evidence="1">Small ribosomal subunit protein uS7</fullName>
    </recommendedName>
    <alternativeName>
        <fullName>40S ribosomal protein S5</fullName>
    </alternativeName>
</protein>
<comment type="similarity">
    <text evidence="1">Belongs to the universal ribosomal protein uS7 family.</text>
</comment>
<evidence type="ECO:0000305" key="1"/>
<accession>O24111</accession>
<keyword id="KW-0687">Ribonucleoprotein</keyword>
<keyword id="KW-0689">Ribosomal protein</keyword>
<proteinExistence type="evidence at transcript level"/>
<dbReference type="EMBL" id="Y08860">
    <property type="protein sequence ID" value="CAA70084.1"/>
    <property type="molecule type" value="mRNA"/>
</dbReference>
<dbReference type="PIR" id="T16965">
    <property type="entry name" value="T16965"/>
</dbReference>
<dbReference type="SMR" id="O24111"/>
<dbReference type="GO" id="GO:0015935">
    <property type="term" value="C:small ribosomal subunit"/>
    <property type="evidence" value="ECO:0007669"/>
    <property type="project" value="InterPro"/>
</dbReference>
<dbReference type="GO" id="GO:0003723">
    <property type="term" value="F:RNA binding"/>
    <property type="evidence" value="ECO:0007669"/>
    <property type="project" value="InterPro"/>
</dbReference>
<dbReference type="GO" id="GO:0003735">
    <property type="term" value="F:structural constituent of ribosome"/>
    <property type="evidence" value="ECO:0007669"/>
    <property type="project" value="InterPro"/>
</dbReference>
<dbReference type="GO" id="GO:0006412">
    <property type="term" value="P:translation"/>
    <property type="evidence" value="ECO:0007669"/>
    <property type="project" value="InterPro"/>
</dbReference>
<dbReference type="CDD" id="cd14867">
    <property type="entry name" value="uS7_Eukaryote"/>
    <property type="match status" value="1"/>
</dbReference>
<dbReference type="FunFam" id="1.10.455.10:FF:000002">
    <property type="entry name" value="40S ribosomal protein S5"/>
    <property type="match status" value="1"/>
</dbReference>
<dbReference type="Gene3D" id="1.10.455.10">
    <property type="entry name" value="Ribosomal protein S7 domain"/>
    <property type="match status" value="1"/>
</dbReference>
<dbReference type="InterPro" id="IPR000235">
    <property type="entry name" value="Ribosomal_uS7"/>
</dbReference>
<dbReference type="InterPro" id="IPR020606">
    <property type="entry name" value="Ribosomal_uS7_CS"/>
</dbReference>
<dbReference type="InterPro" id="IPR023798">
    <property type="entry name" value="Ribosomal_uS7_dom"/>
</dbReference>
<dbReference type="InterPro" id="IPR036823">
    <property type="entry name" value="Ribosomal_uS7_dom_sf"/>
</dbReference>
<dbReference type="InterPro" id="IPR005716">
    <property type="entry name" value="Ribosomal_uS7_euk/arc"/>
</dbReference>
<dbReference type="NCBIfam" id="TIGR01028">
    <property type="entry name" value="uS7_euk_arch"/>
    <property type="match status" value="1"/>
</dbReference>
<dbReference type="PANTHER" id="PTHR11205">
    <property type="entry name" value="RIBOSOMAL PROTEIN S7"/>
    <property type="match status" value="1"/>
</dbReference>
<dbReference type="Pfam" id="PF00177">
    <property type="entry name" value="Ribosomal_S7"/>
    <property type="match status" value="1"/>
</dbReference>
<dbReference type="PIRSF" id="PIRSF002122">
    <property type="entry name" value="RPS7p_RPS7a_RPS5e_RPS7o"/>
    <property type="match status" value="1"/>
</dbReference>
<dbReference type="SUPFAM" id="SSF47973">
    <property type="entry name" value="Ribosomal protein S7"/>
    <property type="match status" value="1"/>
</dbReference>
<dbReference type="PROSITE" id="PS00052">
    <property type="entry name" value="RIBOSOMAL_S7"/>
    <property type="match status" value="1"/>
</dbReference>
<name>RS5_NICPL</name>
<feature type="chain" id="PRO_0000124537" description="Small ribosomal subunit protein uS7">
    <location>
        <begin position="1" status="less than"/>
        <end position="154"/>
    </location>
</feature>
<feature type="non-terminal residue">
    <location>
        <position position="1"/>
    </location>
</feature>
<reference key="1">
    <citation type="submission" date="1996-10" db="EMBL/GenBank/DDBJ databases">
        <authorList>
            <person name="Borisjuk N.V."/>
        </authorList>
    </citation>
    <scope>NUCLEOTIDE SEQUENCE [MRNA]</scope>
</reference>
<gene>
    <name type="primary">RPS5</name>
</gene>
<sequence>HTAGRYQAKRFRKAQCPIVERLTNSLMMHGRNNGKKLMAVRIVKHAMEIIHLLTDLNPIQVIVDAVINSGPREDATRIGSAGVVRRQAVDISPLRRVSQAIYLLTTGARESAFRNIKTIAECLADELINAAKGSSNSYAIKKKDEIERVAKANR</sequence>